<dbReference type="EC" id="7.4.2.11" evidence="1"/>
<dbReference type="EMBL" id="AE015925">
    <property type="protein sequence ID" value="AAP05245.1"/>
    <property type="molecule type" value="Genomic_DNA"/>
</dbReference>
<dbReference type="RefSeq" id="WP_011006461.1">
    <property type="nucleotide sequence ID" value="NC_003361.3"/>
</dbReference>
<dbReference type="SMR" id="Q823C4"/>
<dbReference type="STRING" id="227941.CCA_00501"/>
<dbReference type="KEGG" id="cca:CCA_00501"/>
<dbReference type="eggNOG" id="COG1135">
    <property type="taxonomic scope" value="Bacteria"/>
</dbReference>
<dbReference type="HOGENOM" id="CLU_000604_1_3_0"/>
<dbReference type="OrthoDB" id="9804199at2"/>
<dbReference type="Proteomes" id="UP000002193">
    <property type="component" value="Chromosome"/>
</dbReference>
<dbReference type="GO" id="GO:0005886">
    <property type="term" value="C:plasma membrane"/>
    <property type="evidence" value="ECO:0007669"/>
    <property type="project" value="UniProtKB-SubCell"/>
</dbReference>
<dbReference type="GO" id="GO:0033232">
    <property type="term" value="F:ABC-type D-methionine transporter activity"/>
    <property type="evidence" value="ECO:0007669"/>
    <property type="project" value="UniProtKB-EC"/>
</dbReference>
<dbReference type="GO" id="GO:0005524">
    <property type="term" value="F:ATP binding"/>
    <property type="evidence" value="ECO:0007669"/>
    <property type="project" value="UniProtKB-KW"/>
</dbReference>
<dbReference type="GO" id="GO:0016887">
    <property type="term" value="F:ATP hydrolysis activity"/>
    <property type="evidence" value="ECO:0007669"/>
    <property type="project" value="InterPro"/>
</dbReference>
<dbReference type="Gene3D" id="3.30.70.260">
    <property type="match status" value="1"/>
</dbReference>
<dbReference type="Gene3D" id="3.40.50.300">
    <property type="entry name" value="P-loop containing nucleotide triphosphate hydrolases"/>
    <property type="match status" value="1"/>
</dbReference>
<dbReference type="InterPro" id="IPR003593">
    <property type="entry name" value="AAA+_ATPase"/>
</dbReference>
<dbReference type="InterPro" id="IPR050093">
    <property type="entry name" value="ABC_SmlMolc_Importer"/>
</dbReference>
<dbReference type="InterPro" id="IPR003439">
    <property type="entry name" value="ABC_transporter-like_ATP-bd"/>
</dbReference>
<dbReference type="InterPro" id="IPR017871">
    <property type="entry name" value="ABC_transporter-like_CS"/>
</dbReference>
<dbReference type="InterPro" id="IPR045865">
    <property type="entry name" value="ACT-like_dom_sf"/>
</dbReference>
<dbReference type="InterPro" id="IPR018449">
    <property type="entry name" value="NIL_domain"/>
</dbReference>
<dbReference type="InterPro" id="IPR027417">
    <property type="entry name" value="P-loop_NTPase"/>
</dbReference>
<dbReference type="PANTHER" id="PTHR42781:SF9">
    <property type="entry name" value="AMINO ACID ABC TRANSPORTER, ATP-BINDING PROTEIN-RELATED"/>
    <property type="match status" value="1"/>
</dbReference>
<dbReference type="PANTHER" id="PTHR42781">
    <property type="entry name" value="SPERMIDINE/PUTRESCINE IMPORT ATP-BINDING PROTEIN POTA"/>
    <property type="match status" value="1"/>
</dbReference>
<dbReference type="Pfam" id="PF00005">
    <property type="entry name" value="ABC_tran"/>
    <property type="match status" value="1"/>
</dbReference>
<dbReference type="Pfam" id="PF09383">
    <property type="entry name" value="NIL"/>
    <property type="match status" value="1"/>
</dbReference>
<dbReference type="SMART" id="SM00382">
    <property type="entry name" value="AAA"/>
    <property type="match status" value="1"/>
</dbReference>
<dbReference type="SMART" id="SM00930">
    <property type="entry name" value="NIL"/>
    <property type="match status" value="1"/>
</dbReference>
<dbReference type="SUPFAM" id="SSF55021">
    <property type="entry name" value="ACT-like"/>
    <property type="match status" value="1"/>
</dbReference>
<dbReference type="SUPFAM" id="SSF52540">
    <property type="entry name" value="P-loop containing nucleoside triphosphate hydrolases"/>
    <property type="match status" value="1"/>
</dbReference>
<dbReference type="PROSITE" id="PS00211">
    <property type="entry name" value="ABC_TRANSPORTER_1"/>
    <property type="match status" value="1"/>
</dbReference>
<dbReference type="PROSITE" id="PS50893">
    <property type="entry name" value="ABC_TRANSPORTER_2"/>
    <property type="match status" value="1"/>
</dbReference>
<dbReference type="PROSITE" id="PS51264">
    <property type="entry name" value="METN"/>
    <property type="match status" value="1"/>
</dbReference>
<reference key="1">
    <citation type="journal article" date="2003" name="Nucleic Acids Res.">
        <title>Genome sequence of Chlamydophila caviae (Chlamydia psittaci GPIC): examining the role of niche-specific genes in the evolution of the Chlamydiaceae.</title>
        <authorList>
            <person name="Read T.D."/>
            <person name="Myers G.S.A."/>
            <person name="Brunham R.C."/>
            <person name="Nelson W.C."/>
            <person name="Paulsen I.T."/>
            <person name="Heidelberg J.F."/>
            <person name="Holtzapple E.K."/>
            <person name="Khouri H.M."/>
            <person name="Federova N.B."/>
            <person name="Carty H.A."/>
            <person name="Umayam L.A."/>
            <person name="Haft D.H."/>
            <person name="Peterson J.D."/>
            <person name="Beanan M.J."/>
            <person name="White O."/>
            <person name="Salzberg S.L."/>
            <person name="Hsia R.-C."/>
            <person name="McClarty G."/>
            <person name="Rank R.G."/>
            <person name="Bavoil P.M."/>
            <person name="Fraser C.M."/>
        </authorList>
    </citation>
    <scope>NUCLEOTIDE SEQUENCE [LARGE SCALE GENOMIC DNA]</scope>
    <source>
        <strain>ATCC VR-813 / DSM 19441 / 03DC25 / GPIC</strain>
    </source>
</reference>
<protein>
    <recommendedName>
        <fullName evidence="1">Methionine import ATP-binding protein MetN</fullName>
        <ecNumber evidence="1">7.4.2.11</ecNumber>
    </recommendedName>
</protein>
<keyword id="KW-0029">Amino-acid transport</keyword>
<keyword id="KW-0067">ATP-binding</keyword>
<keyword id="KW-0997">Cell inner membrane</keyword>
<keyword id="KW-1003">Cell membrane</keyword>
<keyword id="KW-0472">Membrane</keyword>
<keyword id="KW-0547">Nucleotide-binding</keyword>
<keyword id="KW-1278">Translocase</keyword>
<keyword id="KW-0813">Transport</keyword>
<sequence length="341" mass="37893">MFEKNFPIISVQKVNKEIGNHRILNDISFSVFPGEIFGIIGHSGSGKSTLLRCLDFLVSPTSGSISVAGFHNLHSDKTNSRLAFAKRVAYISQSCGLFSAKTVFENIVYPLKLHYPDMTKSLIEEKVDNALDFLNLYERKHAYPSRLSGGQKQKVAIAIAIVSDPVVLLCDEITSALDPRSTEDVTDKLLKLNEERGITQVFVSHEIEVVKKLCCQTLVMHQGAIEELGPTEKLFLNPRSSITEELFHMNSIAKGIYNHGENEEILRLGFSQGLAVQGMISKLIQDGQISINILSGDINLFRKVPLGFLIIALSGDKEEREKAKDILIKKGVIIQQLQKTK</sequence>
<organism>
    <name type="scientific">Chlamydia caviae (strain ATCC VR-813 / DSM 19441 / 03DC25 / GPIC)</name>
    <name type="common">Chlamydophila caviae</name>
    <dbReference type="NCBI Taxonomy" id="227941"/>
    <lineage>
        <taxon>Bacteria</taxon>
        <taxon>Pseudomonadati</taxon>
        <taxon>Chlamydiota</taxon>
        <taxon>Chlamydiia</taxon>
        <taxon>Chlamydiales</taxon>
        <taxon>Chlamydiaceae</taxon>
        <taxon>Chlamydia/Chlamydophila group</taxon>
        <taxon>Chlamydia</taxon>
    </lineage>
</organism>
<comment type="function">
    <text evidence="1">Part of the ABC transporter complex MetNIQ involved in methionine import. Responsible for energy coupling to the transport system.</text>
</comment>
<comment type="catalytic activity">
    <reaction evidence="1">
        <text>L-methionine(out) + ATP + H2O = L-methionine(in) + ADP + phosphate + H(+)</text>
        <dbReference type="Rhea" id="RHEA:29779"/>
        <dbReference type="ChEBI" id="CHEBI:15377"/>
        <dbReference type="ChEBI" id="CHEBI:15378"/>
        <dbReference type="ChEBI" id="CHEBI:30616"/>
        <dbReference type="ChEBI" id="CHEBI:43474"/>
        <dbReference type="ChEBI" id="CHEBI:57844"/>
        <dbReference type="ChEBI" id="CHEBI:456216"/>
        <dbReference type="EC" id="7.4.2.11"/>
    </reaction>
</comment>
<comment type="catalytic activity">
    <reaction evidence="1">
        <text>D-methionine(out) + ATP + H2O = D-methionine(in) + ADP + phosphate + H(+)</text>
        <dbReference type="Rhea" id="RHEA:29767"/>
        <dbReference type="ChEBI" id="CHEBI:15377"/>
        <dbReference type="ChEBI" id="CHEBI:15378"/>
        <dbReference type="ChEBI" id="CHEBI:30616"/>
        <dbReference type="ChEBI" id="CHEBI:43474"/>
        <dbReference type="ChEBI" id="CHEBI:57932"/>
        <dbReference type="ChEBI" id="CHEBI:456216"/>
        <dbReference type="EC" id="7.4.2.11"/>
    </reaction>
</comment>
<comment type="subunit">
    <text evidence="1">The complex is composed of two ATP-binding proteins (MetN), two transmembrane proteins (MetI) and a solute-binding protein (MetQ).</text>
</comment>
<comment type="subcellular location">
    <subcellularLocation>
        <location evidence="1">Cell inner membrane</location>
        <topology evidence="1">Peripheral membrane protein</topology>
    </subcellularLocation>
</comment>
<comment type="similarity">
    <text evidence="1">Belongs to the ABC transporter superfamily. Methionine importer (TC 3.A.1.24) family.</text>
</comment>
<gene>
    <name evidence="1" type="primary">metN</name>
    <name type="ordered locus">CCA_00501</name>
</gene>
<feature type="chain" id="PRO_0000270280" description="Methionine import ATP-binding protein MetN">
    <location>
        <begin position="1"/>
        <end position="341"/>
    </location>
</feature>
<feature type="domain" description="ABC transporter" evidence="1">
    <location>
        <begin position="9"/>
        <end position="247"/>
    </location>
</feature>
<feature type="binding site" evidence="1">
    <location>
        <begin position="41"/>
        <end position="48"/>
    </location>
    <ligand>
        <name>ATP</name>
        <dbReference type="ChEBI" id="CHEBI:30616"/>
    </ligand>
</feature>
<proteinExistence type="inferred from homology"/>
<name>METN_CHLCV</name>
<evidence type="ECO:0000255" key="1">
    <source>
        <dbReference type="HAMAP-Rule" id="MF_01719"/>
    </source>
</evidence>
<accession>Q823C4</accession>